<feature type="chain" id="PRO_0000312389" description="ATP synthase subunit 9, mitochondrial">
    <location>
        <begin position="1"/>
        <end position="88"/>
    </location>
</feature>
<feature type="transmembrane region" description="Helical" evidence="2">
    <location>
        <begin position="30"/>
        <end position="50"/>
    </location>
</feature>
<feature type="transmembrane region" description="Helical" evidence="2">
    <location>
        <begin position="66"/>
        <end position="86"/>
    </location>
</feature>
<feature type="site" description="Reversibly protonated during proton transport" evidence="1">
    <location>
        <position position="72"/>
    </location>
</feature>
<reference key="1">
    <citation type="journal article" date="2008" name="Mol. Biol. Evol.">
        <title>Mitochondrial genome evolution in the social amoebae.</title>
        <authorList>
            <person name="Heidel A.J."/>
            <person name="Gloeckner G."/>
        </authorList>
    </citation>
    <scope>NUCLEOTIDE SEQUENCE [LARGE SCALE GENOMIC DNA]</scope>
</reference>
<protein>
    <recommendedName>
        <fullName>ATP synthase subunit 9, mitochondrial</fullName>
    </recommendedName>
    <alternativeName>
        <fullName>Lipid-binding protein</fullName>
    </alternativeName>
</protein>
<geneLocation type="mitochondrion"/>
<gene>
    <name type="primary">atp9</name>
</gene>
<dbReference type="EMBL" id="DQ336395">
    <property type="protein sequence ID" value="ABC60380.1"/>
    <property type="molecule type" value="Genomic_DNA"/>
</dbReference>
<dbReference type="RefSeq" id="YP_492629.1">
    <property type="nucleotide sequence ID" value="NC_007787.2"/>
</dbReference>
<dbReference type="SMR" id="Q2LCR3"/>
<dbReference type="GeneID" id="3912624"/>
<dbReference type="GO" id="GO:0031966">
    <property type="term" value="C:mitochondrial membrane"/>
    <property type="evidence" value="ECO:0007669"/>
    <property type="project" value="UniProtKB-SubCell"/>
</dbReference>
<dbReference type="GO" id="GO:0045259">
    <property type="term" value="C:proton-transporting ATP synthase complex"/>
    <property type="evidence" value="ECO:0007669"/>
    <property type="project" value="UniProtKB-KW"/>
</dbReference>
<dbReference type="GO" id="GO:0033177">
    <property type="term" value="C:proton-transporting two-sector ATPase complex, proton-transporting domain"/>
    <property type="evidence" value="ECO:0007669"/>
    <property type="project" value="InterPro"/>
</dbReference>
<dbReference type="GO" id="GO:0008289">
    <property type="term" value="F:lipid binding"/>
    <property type="evidence" value="ECO:0007669"/>
    <property type="project" value="UniProtKB-KW"/>
</dbReference>
<dbReference type="GO" id="GO:0015078">
    <property type="term" value="F:proton transmembrane transporter activity"/>
    <property type="evidence" value="ECO:0007669"/>
    <property type="project" value="InterPro"/>
</dbReference>
<dbReference type="GO" id="GO:0015986">
    <property type="term" value="P:proton motive force-driven ATP synthesis"/>
    <property type="evidence" value="ECO:0007669"/>
    <property type="project" value="InterPro"/>
</dbReference>
<dbReference type="CDD" id="cd18182">
    <property type="entry name" value="ATP-synt_Fo_c_ATP5G3"/>
    <property type="match status" value="1"/>
</dbReference>
<dbReference type="FunFam" id="1.20.20.10:FF:000008">
    <property type="entry name" value="ATPase subunit 9 homolog"/>
    <property type="match status" value="1"/>
</dbReference>
<dbReference type="Gene3D" id="1.20.20.10">
    <property type="entry name" value="F1F0 ATP synthase subunit C"/>
    <property type="match status" value="1"/>
</dbReference>
<dbReference type="HAMAP" id="MF_01396">
    <property type="entry name" value="ATP_synth_c_bact"/>
    <property type="match status" value="1"/>
</dbReference>
<dbReference type="InterPro" id="IPR000454">
    <property type="entry name" value="ATP_synth_F0_csu"/>
</dbReference>
<dbReference type="InterPro" id="IPR038662">
    <property type="entry name" value="ATP_synth_F0_csu_sf"/>
</dbReference>
<dbReference type="InterPro" id="IPR002379">
    <property type="entry name" value="ATPase_proteolipid_c-like_dom"/>
</dbReference>
<dbReference type="InterPro" id="IPR035921">
    <property type="entry name" value="F/V-ATP_Csub_sf"/>
</dbReference>
<dbReference type="PANTHER" id="PTHR10031">
    <property type="entry name" value="ATP SYNTHASE LIPID-BINDING PROTEIN, MITOCHONDRIAL"/>
    <property type="match status" value="1"/>
</dbReference>
<dbReference type="PANTHER" id="PTHR10031:SF0">
    <property type="entry name" value="ATPASE PROTEIN 9"/>
    <property type="match status" value="1"/>
</dbReference>
<dbReference type="Pfam" id="PF00137">
    <property type="entry name" value="ATP-synt_C"/>
    <property type="match status" value="1"/>
</dbReference>
<dbReference type="PRINTS" id="PR00124">
    <property type="entry name" value="ATPASEC"/>
</dbReference>
<dbReference type="SUPFAM" id="SSF81333">
    <property type="entry name" value="F1F0 ATP synthase subunit C"/>
    <property type="match status" value="1"/>
</dbReference>
<name>ATP9_DICCI</name>
<sequence>MKNIVKIEQLELASAVVELGKKVGAGLAAIGLTGAGAGVGIVFAAFILAVGMNPNLRGELFKLAMLGFALSEAVGLLALMMSFLILYS</sequence>
<proteinExistence type="inferred from homology"/>
<organism>
    <name type="scientific">Dictyostelium citrinum</name>
    <name type="common">Slime mold</name>
    <dbReference type="NCBI Taxonomy" id="361072"/>
    <lineage>
        <taxon>Eukaryota</taxon>
        <taxon>Amoebozoa</taxon>
        <taxon>Evosea</taxon>
        <taxon>Eumycetozoa</taxon>
        <taxon>Dictyostelia</taxon>
        <taxon>Dictyosteliales</taxon>
        <taxon>Dictyosteliaceae</taxon>
        <taxon>Dictyostelium</taxon>
    </lineage>
</organism>
<comment type="function">
    <text evidence="1">Mitochondrial membrane ATP synthase (F(1)F(0) ATP synthase or Complex V) produces ATP from ADP in the presence of a proton gradient across the membrane which is generated by electron transport complexes of the respiratory chain. F-type ATPases consist of two structural domains, F(1) - containing the extramembraneous catalytic core and F(0) - containing the membrane proton channel, linked together by a central stalk and a peripheral stalk. During catalysis, ATP synthesis in the catalytic domain of F(1) is coupled via a rotary mechanism of the central stalk subunits to proton translocation. Part of the complex F(0) domain. A homomeric c-ring of probably 10 subunits is part of the complex rotary element (By similarity).</text>
</comment>
<comment type="subunit">
    <text evidence="1">F-type ATPases have 2 components, CF(1) - the catalytic core - and CF(0) - the membrane proton channel. CF(1) has five subunits: alpha(3), beta(3), gamma(1), delta(1), epsilon(1). CF(0) has three main subunits: a, b and c (By similarity).</text>
</comment>
<comment type="subcellular location">
    <subcellularLocation>
        <location evidence="3">Mitochondrion membrane</location>
        <topology evidence="3">Multi-pass membrane protein</topology>
    </subcellularLocation>
</comment>
<comment type="similarity">
    <text evidence="3">Belongs to the ATPase C chain family.</text>
</comment>
<evidence type="ECO:0000250" key="1"/>
<evidence type="ECO:0000255" key="2"/>
<evidence type="ECO:0000305" key="3"/>
<keyword id="KW-0138">CF(0)</keyword>
<keyword id="KW-0375">Hydrogen ion transport</keyword>
<keyword id="KW-0406">Ion transport</keyword>
<keyword id="KW-0446">Lipid-binding</keyword>
<keyword id="KW-0472">Membrane</keyword>
<keyword id="KW-0496">Mitochondrion</keyword>
<keyword id="KW-0812">Transmembrane</keyword>
<keyword id="KW-1133">Transmembrane helix</keyword>
<keyword id="KW-0813">Transport</keyword>
<accession>Q2LCR3</accession>